<accession>Q68Y86</accession>
<dbReference type="EMBL" id="AB162851">
    <property type="protein sequence ID" value="BAD36829.1"/>
    <property type="molecule type" value="mRNA"/>
</dbReference>
<dbReference type="EMBL" id="AY675235">
    <property type="protein sequence ID" value="AAU14060.1"/>
    <property type="molecule type" value="mRNA"/>
</dbReference>
<dbReference type="RefSeq" id="NP_001003967.1">
    <property type="nucleotide sequence ID" value="NM_001003967.1"/>
</dbReference>
<dbReference type="SMR" id="Q68Y86"/>
<dbReference type="FunCoup" id="Q68Y86">
    <property type="interactions" value="87"/>
</dbReference>
<dbReference type="STRING" id="9615.ENSCAFP00000061999"/>
<dbReference type="GlyCosmos" id="Q68Y86">
    <property type="glycosylation" value="2 sites, No reported glycans"/>
</dbReference>
<dbReference type="PaxDb" id="9612-ENSCAFP00000019742"/>
<dbReference type="Ensembl" id="ENSCAFT00030018138.1">
    <property type="protein sequence ID" value="ENSCAFP00030015837.1"/>
    <property type="gene ID" value="ENSCAFG00030009794.1"/>
</dbReference>
<dbReference type="GeneID" id="445452"/>
<dbReference type="KEGG" id="cfa:445452"/>
<dbReference type="CTD" id="6369"/>
<dbReference type="eggNOG" id="ENOG502S6ZP">
    <property type="taxonomic scope" value="Eukaryota"/>
</dbReference>
<dbReference type="HOGENOM" id="CLU_141716_1_1_1"/>
<dbReference type="InParanoid" id="Q68Y86"/>
<dbReference type="OMA" id="QKFCGNP"/>
<dbReference type="OrthoDB" id="9834099at2759"/>
<dbReference type="TreeFam" id="TF334888"/>
<dbReference type="Proteomes" id="UP000002254">
    <property type="component" value="Unplaced"/>
</dbReference>
<dbReference type="Proteomes" id="UP000694429">
    <property type="component" value="Chromosome 6"/>
</dbReference>
<dbReference type="Proteomes" id="UP000694542">
    <property type="component" value="Unplaced"/>
</dbReference>
<dbReference type="Proteomes" id="UP000805418">
    <property type="component" value="Unplaced"/>
</dbReference>
<dbReference type="GO" id="GO:0005615">
    <property type="term" value="C:extracellular space"/>
    <property type="evidence" value="ECO:0000318"/>
    <property type="project" value="GO_Central"/>
</dbReference>
<dbReference type="GO" id="GO:0048020">
    <property type="term" value="F:CCR chemokine receptor binding"/>
    <property type="evidence" value="ECO:0000318"/>
    <property type="project" value="GO_Central"/>
</dbReference>
<dbReference type="GO" id="GO:0008009">
    <property type="term" value="F:chemokine activity"/>
    <property type="evidence" value="ECO:0000318"/>
    <property type="project" value="GO_Central"/>
</dbReference>
<dbReference type="GO" id="GO:0061844">
    <property type="term" value="P:antimicrobial humoral immune response mediated by antimicrobial peptide"/>
    <property type="evidence" value="ECO:0000318"/>
    <property type="project" value="GO_Central"/>
</dbReference>
<dbReference type="GO" id="GO:0070098">
    <property type="term" value="P:chemokine-mediated signaling pathway"/>
    <property type="evidence" value="ECO:0000318"/>
    <property type="project" value="GO_Central"/>
</dbReference>
<dbReference type="GO" id="GO:0048245">
    <property type="term" value="P:eosinophil chemotaxis"/>
    <property type="evidence" value="ECO:0000318"/>
    <property type="project" value="GO_Central"/>
</dbReference>
<dbReference type="GO" id="GO:0006954">
    <property type="term" value="P:inflammatory response"/>
    <property type="evidence" value="ECO:0000318"/>
    <property type="project" value="GO_Central"/>
</dbReference>
<dbReference type="GO" id="GO:0030335">
    <property type="term" value="P:positive regulation of cell migration"/>
    <property type="evidence" value="ECO:0000318"/>
    <property type="project" value="GO_Central"/>
</dbReference>
<dbReference type="CDD" id="cd00272">
    <property type="entry name" value="Chemokine_CC"/>
    <property type="match status" value="1"/>
</dbReference>
<dbReference type="FunFam" id="2.40.50.40:FF:000002">
    <property type="entry name" value="C-C motif chemokine"/>
    <property type="match status" value="1"/>
</dbReference>
<dbReference type="Gene3D" id="2.40.50.40">
    <property type="match status" value="1"/>
</dbReference>
<dbReference type="InterPro" id="IPR039809">
    <property type="entry name" value="Chemokine_b/g/d"/>
</dbReference>
<dbReference type="InterPro" id="IPR001811">
    <property type="entry name" value="Chemokine_IL8-like_dom"/>
</dbReference>
<dbReference type="InterPro" id="IPR036048">
    <property type="entry name" value="Interleukin_8-like_sf"/>
</dbReference>
<dbReference type="PANTHER" id="PTHR12015:SF100">
    <property type="entry name" value="C-C MOTIF CHEMOKINE 24"/>
    <property type="match status" value="1"/>
</dbReference>
<dbReference type="PANTHER" id="PTHR12015">
    <property type="entry name" value="SMALL INDUCIBLE CYTOKINE A"/>
    <property type="match status" value="1"/>
</dbReference>
<dbReference type="Pfam" id="PF00048">
    <property type="entry name" value="IL8"/>
    <property type="match status" value="1"/>
</dbReference>
<dbReference type="SMART" id="SM00199">
    <property type="entry name" value="SCY"/>
    <property type="match status" value="1"/>
</dbReference>
<dbReference type="SUPFAM" id="SSF54117">
    <property type="entry name" value="Interleukin 8-like chemokines"/>
    <property type="match status" value="1"/>
</dbReference>
<feature type="signal peptide" evidence="2">
    <location>
        <begin position="1"/>
        <end position="26"/>
    </location>
</feature>
<feature type="chain" id="PRO_0000005231" description="C-C motif chemokine 24">
    <location>
        <begin position="27"/>
        <end position="119"/>
    </location>
</feature>
<feature type="glycosylation site" description="N-linked (GlcNAc...) asparagine" evidence="2">
    <location>
        <position position="54"/>
    </location>
</feature>
<feature type="glycosylation site" description="N-linked (GlcNAc...) asparagine" evidence="2">
    <location>
        <position position="115"/>
    </location>
</feature>
<feature type="disulfide bond" evidence="1">
    <location>
        <begin position="33"/>
        <end position="58"/>
    </location>
</feature>
<feature type="disulfide bond" evidence="1">
    <location>
        <begin position="34"/>
        <end position="74"/>
    </location>
</feature>
<proteinExistence type="inferred from homology"/>
<reference key="1">
    <citation type="submission" date="2004-02" db="EMBL/GenBank/DDBJ databases">
        <title>Expression analysis of eosinophil chemotactic protein-2 (eotaxin-2/CCL24) gene in canine atopic dermatitis.</title>
        <authorList>
            <person name="Tsukui T."/>
            <person name="Sakaguchi M."/>
            <person name="Maeda S."/>
            <person name="Koyanagi M."/>
            <person name="Masuda K."/>
            <person name="Ohno K."/>
            <person name="Tsujimoto H."/>
            <person name="Iwabuchi S."/>
        </authorList>
    </citation>
    <scope>NUCLEOTIDE SEQUENCE [MRNA]</scope>
</reference>
<reference key="2">
    <citation type="submission" date="2004-07" db="EMBL/GenBank/DDBJ databases">
        <title>Identification of coding sequences for canine monocyte chemotactic protein-2 (CCL8), eotaxin 2 (CCL24), eotaxin 3 (CCL26) and C-C chemokine receptor 3 (CCR3).</title>
        <authorList>
            <person name="Peters I.R."/>
            <person name="Peeters D."/>
            <person name="Clercx C."/>
            <person name="Day M.J."/>
        </authorList>
    </citation>
    <scope>NUCLEOTIDE SEQUENCE [MRNA]</scope>
</reference>
<keyword id="KW-0145">Chemotaxis</keyword>
<keyword id="KW-0202">Cytokine</keyword>
<keyword id="KW-1015">Disulfide bond</keyword>
<keyword id="KW-0325">Glycoprotein</keyword>
<keyword id="KW-0395">Inflammatory response</keyword>
<keyword id="KW-1185">Reference proteome</keyword>
<keyword id="KW-0964">Secreted</keyword>
<keyword id="KW-0732">Signal</keyword>
<gene>
    <name evidence="3 4" type="primary">CCL24</name>
</gene>
<protein>
    <recommendedName>
        <fullName>C-C motif chemokine 24</fullName>
    </recommendedName>
    <alternativeName>
        <fullName evidence="3">Eosinophil chemotactic protein 2</fullName>
        <shortName evidence="3">Eotaxin-2</shortName>
    </alternativeName>
    <alternativeName>
        <fullName>Small-inducible cytokine A24</fullName>
    </alternativeName>
</protein>
<comment type="function">
    <text evidence="1">Chemotactic for resting T-lymphocytes, and eosinophils. Has lower chemotactic activity for neutrophils but none for monocytes and activated lymphocytes. Is a strong suppressor of colony formation by a multipotential hematopoietic progenitor cell line. Binds to CCR3.</text>
</comment>
<comment type="subcellular location">
    <subcellularLocation>
        <location evidence="1">Secreted</location>
    </subcellularLocation>
</comment>
<comment type="similarity">
    <text evidence="5">Belongs to the intercrine beta (chemokine CC) family.</text>
</comment>
<evidence type="ECO:0000250" key="1">
    <source>
        <dbReference type="UniProtKB" id="O00175"/>
    </source>
</evidence>
<evidence type="ECO:0000255" key="2"/>
<evidence type="ECO:0000303" key="3">
    <source ref="1"/>
</evidence>
<evidence type="ECO:0000303" key="4">
    <source ref="2"/>
</evidence>
<evidence type="ECO:0000305" key="5"/>
<name>CCL24_CANLF</name>
<sequence length="119" mass="12987">MAGLATFVVSLLLVTLCAHCIDPAGSVSIPSSCCMFFISKKVPENRVVTYQLLNGSVCPKAGVVFTTKKNQKFCGDPQLHWVQKLMKNIEARRKKVSPGVRAMSTKALVQRYPANSTSI</sequence>
<organism>
    <name type="scientific">Canis lupus familiaris</name>
    <name type="common">Dog</name>
    <name type="synonym">Canis familiaris</name>
    <dbReference type="NCBI Taxonomy" id="9615"/>
    <lineage>
        <taxon>Eukaryota</taxon>
        <taxon>Metazoa</taxon>
        <taxon>Chordata</taxon>
        <taxon>Craniata</taxon>
        <taxon>Vertebrata</taxon>
        <taxon>Euteleostomi</taxon>
        <taxon>Mammalia</taxon>
        <taxon>Eutheria</taxon>
        <taxon>Laurasiatheria</taxon>
        <taxon>Carnivora</taxon>
        <taxon>Caniformia</taxon>
        <taxon>Canidae</taxon>
        <taxon>Canis</taxon>
    </lineage>
</organism>